<feature type="signal peptide" evidence="1">
    <location>
        <begin position="1"/>
        <end position="34"/>
    </location>
</feature>
<feature type="chain" id="PRO_5007214105" description="Cupincin">
    <location>
        <begin position="35"/>
        <end position="470"/>
    </location>
</feature>
<feature type="domain" description="Cupin type-1 1" evidence="2">
    <location>
        <begin position="57"/>
        <end position="215"/>
    </location>
</feature>
<feature type="domain" description="Cupin type-1 2" evidence="2">
    <location>
        <begin position="259"/>
        <end position="445"/>
    </location>
</feature>
<feature type="region of interest" description="Disordered" evidence="4">
    <location>
        <begin position="36"/>
        <end position="59"/>
    </location>
</feature>
<feature type="region of interest" description="Disordered" evidence="4">
    <location>
        <begin position="240"/>
        <end position="261"/>
    </location>
</feature>
<feature type="region of interest" description="Disordered" evidence="4">
    <location>
        <begin position="330"/>
        <end position="368"/>
    </location>
</feature>
<feature type="compositionally biased region" description="Basic and acidic residues" evidence="4">
    <location>
        <begin position="36"/>
        <end position="52"/>
    </location>
</feature>
<feature type="compositionally biased region" description="Basic and acidic residues" evidence="4">
    <location>
        <begin position="338"/>
        <end position="367"/>
    </location>
</feature>
<feature type="binding site" evidence="1">
    <location>
        <position position="347"/>
    </location>
    <ligand>
        <name>Zn(2+)</name>
        <dbReference type="ChEBI" id="CHEBI:29105"/>
        <note>catalytic</note>
    </ligand>
</feature>
<feature type="binding site" evidence="1">
    <location>
        <position position="352"/>
    </location>
    <ligand>
        <name>Zn(2+)</name>
        <dbReference type="ChEBI" id="CHEBI:29105"/>
        <note>catalytic</note>
    </ligand>
</feature>
<feature type="binding site" evidence="1">
    <location>
        <position position="360"/>
    </location>
    <ligand>
        <name>Zn(2+)</name>
        <dbReference type="ChEBI" id="CHEBI:29105"/>
        <note>catalytic</note>
    </ligand>
</feature>
<feature type="glycosylation site" description="N-linked (GlcNAc...) asparagine" evidence="3">
    <location>
        <position position="297"/>
    </location>
</feature>
<feature type="sequence conflict" description="In Ref. 2; AAM33459." evidence="7" ref="2">
    <original>R</original>
    <variation>Q</variation>
    <location>
        <position position="40"/>
    </location>
</feature>
<feature type="sequence conflict" description="In Ref. 2; AAM33459." evidence="7" ref="2">
    <original>S</original>
    <variation>P</variation>
    <location>
        <position position="259"/>
    </location>
</feature>
<feature type="sequence conflict" description="In Ref. 2; AAM33459." evidence="7" ref="2">
    <original>E</original>
    <variation>G</variation>
    <location>
        <position position="380"/>
    </location>
</feature>
<feature type="sequence conflict" description="In Ref. 2; AAM33459." evidence="7" ref="2">
    <original>G</original>
    <variation>S</variation>
    <location>
        <position position="460"/>
    </location>
</feature>
<keyword id="KW-0020">Allergen</keyword>
<keyword id="KW-0325">Glycoprotein</keyword>
<keyword id="KW-0378">Hydrolase</keyword>
<keyword id="KW-0479">Metal-binding</keyword>
<keyword id="KW-0482">Metalloprotease</keyword>
<keyword id="KW-0645">Protease</keyword>
<keyword id="KW-1185">Reference proteome</keyword>
<keyword id="KW-0964">Secreted</keyword>
<keyword id="KW-0708">Seed storage protein</keyword>
<keyword id="KW-0732">Signal</keyword>
<keyword id="KW-0758">Storage protein</keyword>
<keyword id="KW-0862">Zinc</keyword>
<reference key="1">
    <citation type="journal article" date="2009" name="Sigmul Saengmyeong Gong Haghoeji">
        <title>Structural analysis of expressed sequence tags in immature seed of Oryza sativa L.</title>
        <authorList>
            <person name="Yoon U.H."/>
            <person name="Kim Y.H."/>
        </authorList>
    </citation>
    <scope>NUCLEOTIDE SEQUENCE [MRNA]</scope>
    <source>
        <strain>cv. Zhonghua 11</strain>
        <tissue>Seed</tissue>
    </source>
</reference>
<reference key="2">
    <citation type="submission" date="2003-02" db="EMBL/GenBank/DDBJ databases">
        <title>Oryza sativa japonica group globulin-like protein mRNA.</title>
        <authorList>
            <person name="Wang X."/>
            <person name="Li Q.Z."/>
            <person name="Huo S.N."/>
            <person name="Zhang X.S."/>
        </authorList>
    </citation>
    <scope>NUCLEOTIDE SEQUENCE [MRNA]</scope>
</reference>
<reference key="3">
    <citation type="journal article" date="2005" name="Genome Res.">
        <title>Sequence, annotation, and analysis of synteny between rice chromosome 3 and diverged grass species.</title>
        <authorList>
            <consortium name="The rice chromosome 3 sequencing consortium"/>
            <person name="Buell C.R."/>
            <person name="Yuan Q."/>
            <person name="Ouyang S."/>
            <person name="Liu J."/>
            <person name="Zhu W."/>
            <person name="Wang A."/>
            <person name="Maiti R."/>
            <person name="Haas B."/>
            <person name="Wortman J."/>
            <person name="Pertea M."/>
            <person name="Jones K.M."/>
            <person name="Kim M."/>
            <person name="Overton L."/>
            <person name="Tsitrin T."/>
            <person name="Fadrosh D."/>
            <person name="Bera J."/>
            <person name="Weaver B."/>
            <person name="Jin S."/>
            <person name="Johri S."/>
            <person name="Reardon M."/>
            <person name="Webb K."/>
            <person name="Hill J."/>
            <person name="Moffat K."/>
            <person name="Tallon L."/>
            <person name="Van Aken S."/>
            <person name="Lewis M."/>
            <person name="Utterback T."/>
            <person name="Feldblyum T."/>
            <person name="Zismann V."/>
            <person name="Iobst S."/>
            <person name="Hsiao J."/>
            <person name="de Vazeille A.R."/>
            <person name="Salzberg S.L."/>
            <person name="White O."/>
            <person name="Fraser C.M."/>
            <person name="Yu Y."/>
            <person name="Kim H."/>
            <person name="Rambo T."/>
            <person name="Currie J."/>
            <person name="Collura K."/>
            <person name="Kernodle-Thompson S."/>
            <person name="Wei F."/>
            <person name="Kudrna K."/>
            <person name="Ammiraju J.S.S."/>
            <person name="Luo M."/>
            <person name="Goicoechea J.L."/>
            <person name="Wing R.A."/>
            <person name="Henry D."/>
            <person name="Oates R."/>
            <person name="Palmer M."/>
            <person name="Pries G."/>
            <person name="Saski C."/>
            <person name="Simmons J."/>
            <person name="Soderlund C."/>
            <person name="Nelson W."/>
            <person name="de la Bastide M."/>
            <person name="Spiegel L."/>
            <person name="Nascimento L."/>
            <person name="Huang E."/>
            <person name="Preston R."/>
            <person name="Zutavern T."/>
            <person name="Palmer L."/>
            <person name="O'Shaughnessy A."/>
            <person name="Dike S."/>
            <person name="McCombie W.R."/>
            <person name="Minx P."/>
            <person name="Cordum H."/>
            <person name="Wilson R."/>
            <person name="Jin W."/>
            <person name="Lee H.R."/>
            <person name="Jiang J."/>
            <person name="Jackson S."/>
        </authorList>
    </citation>
    <scope>NUCLEOTIDE SEQUENCE [LARGE SCALE GENOMIC DNA]</scope>
    <source>
        <strain>cv. Nipponbare</strain>
    </source>
</reference>
<reference key="4">
    <citation type="journal article" date="2005" name="Nature">
        <title>The map-based sequence of the rice genome.</title>
        <authorList>
            <consortium name="International rice genome sequencing project (IRGSP)"/>
        </authorList>
    </citation>
    <scope>NUCLEOTIDE SEQUENCE [LARGE SCALE GENOMIC DNA]</scope>
    <source>
        <strain>cv. Nipponbare</strain>
    </source>
</reference>
<reference key="5">
    <citation type="journal article" date="2008" name="Nucleic Acids Res.">
        <title>The rice annotation project database (RAP-DB): 2008 update.</title>
        <authorList>
            <consortium name="The rice annotation project (RAP)"/>
        </authorList>
    </citation>
    <scope>GENOME REANNOTATION</scope>
    <source>
        <strain>cv. Nipponbare</strain>
    </source>
</reference>
<reference key="6">
    <citation type="journal article" date="2013" name="Rice">
        <title>Improvement of the Oryza sativa Nipponbare reference genome using next generation sequence and optical map data.</title>
        <authorList>
            <person name="Kawahara Y."/>
            <person name="de la Bastide M."/>
            <person name="Hamilton J.P."/>
            <person name="Kanamori H."/>
            <person name="McCombie W.R."/>
            <person name="Ouyang S."/>
            <person name="Schwartz D.C."/>
            <person name="Tanaka T."/>
            <person name="Wu J."/>
            <person name="Zhou S."/>
            <person name="Childs K.L."/>
            <person name="Davidson R.M."/>
            <person name="Lin H."/>
            <person name="Quesada-Ocampo L."/>
            <person name="Vaillancourt B."/>
            <person name="Sakai H."/>
            <person name="Lee S.S."/>
            <person name="Kim J."/>
            <person name="Numa H."/>
            <person name="Itoh T."/>
            <person name="Buell C.R."/>
            <person name="Matsumoto T."/>
        </authorList>
    </citation>
    <scope>GENOME REANNOTATION</scope>
    <source>
        <strain>cv. Nipponbare</strain>
    </source>
</reference>
<reference key="7">
    <citation type="journal article" date="2003" name="Science">
        <title>Collection, mapping, and annotation of over 28,000 cDNA clones from japonica rice.</title>
        <authorList>
            <consortium name="The rice full-length cDNA consortium"/>
        </authorList>
    </citation>
    <scope>NUCLEOTIDE SEQUENCE [LARGE SCALE MRNA]</scope>
    <source>
        <strain>cv. Nipponbare</strain>
    </source>
</reference>
<reference key="8">
    <citation type="journal article" date="2011" name="Regul. Toxicol. Pharmacol.">
        <title>Proteomic analysis of known and candidate rice allergens between non-transgenic and transgenic plants.</title>
        <authorList>
            <person name="Satoh R."/>
            <person name="Nakamura R."/>
            <person name="Komatsu A."/>
            <person name="Oshima M."/>
            <person name="Teshima R."/>
        </authorList>
    </citation>
    <scope>IDENTIFICATION BY MASS SPECTROMETRY</scope>
    <scope>ALLERGEN</scope>
</reference>
<reference key="9">
    <citation type="journal article" date="2013" name="J. Proteome Res.">
        <title>MucoRice-cholera toxin B-subunit, a rice-based oral cholera vaccine, down-regulates the expression of alpha-amylase/trypsin inhibitor-like protein family as major rice allergens.</title>
        <authorList>
            <person name="Kurokawa S."/>
            <person name="Nakamura R."/>
            <person name="Mejima M."/>
            <person name="Kozuka-Hata H."/>
            <person name="Kuroda M."/>
            <person name="Takeyama N."/>
            <person name="Oyama M."/>
            <person name="Satoh S."/>
            <person name="Kiyono H."/>
            <person name="Masumura T."/>
            <person name="Teshima R."/>
            <person name="Yuki Y."/>
        </authorList>
    </citation>
    <scope>IDENTIFICATION BY MASS SPECTROMETRY</scope>
    <scope>ALLERGEN</scope>
</reference>
<proteinExistence type="evidence at protein level"/>
<gene>
    <name evidence="10" type="ordered locus">Os03g0793700</name>
    <name evidence="9" type="ordered locus">LOC_Os03g57960</name>
    <name evidence="8" type="ORF">OSJNBb0060J21.10</name>
</gene>
<sequence length="470" mass="52126">MAKKKTSSSMARSQLAALLISLCFLSLASNAVGWSRRGEREEEDERRRHGGEGGRPYHLGEESFRHWTRTRHGRFSVLERFPDEQVVGAAVGGYRVAVLEAAPRAFLQPSHYDADEVFYVKEGEGVIVLLREGRRESFCVREGDAMVIPAGAIVYSANTHSSKWFRVVMLLNPVSTPGHFEEYFPVGGDRPESFFSAFSDDVLQAAFNTRREELEKVFERQREGGEITTAPEEQIRELSKSCSRGGGGGSGSEWEIKPSSLTGKSPYFSNNHGKLFELTGDECRHLKKLDLQIGLANITRGSMIAPNYNTRATKLAVVLQGSGYFEMACPHVSGGGSSERREREREHGRRREEEQGEEEHGERGEKARRYHKVRAQVREESVIVIPASHPATIVASEGESLAVVCFFVGANHDEKVFLAGRNSPLRQLDDPAKKLVFGGSAAREADRVLAAQPEQILLRGPHGRGSVSDM</sequence>
<evidence type="ECO:0000250" key="1">
    <source>
        <dbReference type="UniProtKB" id="B8AL97"/>
    </source>
</evidence>
<evidence type="ECO:0000255" key="2"/>
<evidence type="ECO:0000255" key="3">
    <source>
        <dbReference type="PROSITE-ProRule" id="PRU00498"/>
    </source>
</evidence>
<evidence type="ECO:0000256" key="4">
    <source>
        <dbReference type="SAM" id="MobiDB-lite"/>
    </source>
</evidence>
<evidence type="ECO:0000269" key="5">
    <source>
    </source>
</evidence>
<evidence type="ECO:0000269" key="6">
    <source>
    </source>
</evidence>
<evidence type="ECO:0000305" key="7"/>
<evidence type="ECO:0000312" key="8">
    <source>
        <dbReference type="EMBL" id="AAO37963.2"/>
    </source>
</evidence>
<evidence type="ECO:0000312" key="9">
    <source>
        <dbReference type="EMBL" id="ABF99314.1"/>
    </source>
</evidence>
<evidence type="ECO:0000312" key="10">
    <source>
        <dbReference type="EMBL" id="BAF13447.1"/>
    </source>
</evidence>
<name>CUCIN_ORYSJ</name>
<comment type="function">
    <text evidence="1 7">Seed storage protein (Probable). Globulin-like protein that acts as a zinc metalloprotease. Cleaves specifically between Leu-15 and Tyr-16 of insulin B chain, and Gln-1 and Leu-2 of neurotensin (NT) peptide in vitro. May play a role as an initiating endopeptidase in germinating seeds (By similarity).</text>
</comment>
<comment type="cofactor">
    <cofactor evidence="1">
        <name>Zn(2+)</name>
        <dbReference type="ChEBI" id="CHEBI:29105"/>
    </cofactor>
</comment>
<comment type="subunit">
    <text evidence="1">Homotrimer.</text>
</comment>
<comment type="subcellular location">
    <subcellularLocation>
        <location evidence="7">Secreted</location>
    </subcellularLocation>
</comment>
<comment type="allergen">
    <text evidence="5 6">Causes an allergic reaction in human. Binds to IgE.</text>
</comment>
<comment type="similarity">
    <text evidence="7">Belongs to the 7S seed storage protein family.</text>
</comment>
<accession>Q852L2</accession>
<accession>Q8L8I0</accession>
<organism>
    <name type="scientific">Oryza sativa subsp. japonica</name>
    <name type="common">Rice</name>
    <dbReference type="NCBI Taxonomy" id="39947"/>
    <lineage>
        <taxon>Eukaryota</taxon>
        <taxon>Viridiplantae</taxon>
        <taxon>Streptophyta</taxon>
        <taxon>Embryophyta</taxon>
        <taxon>Tracheophyta</taxon>
        <taxon>Spermatophyta</taxon>
        <taxon>Magnoliopsida</taxon>
        <taxon>Liliopsida</taxon>
        <taxon>Poales</taxon>
        <taxon>Poaceae</taxon>
        <taxon>BOP clade</taxon>
        <taxon>Oryzoideae</taxon>
        <taxon>Oryzeae</taxon>
        <taxon>Oryzinae</taxon>
        <taxon>Oryza</taxon>
        <taxon>Oryza sativa</taxon>
    </lineage>
</organism>
<protein>
    <recommendedName>
        <fullName evidence="7">Cupincin</fullName>
        <ecNumber evidence="7">3.4.-.-</ecNumber>
    </recommendedName>
    <alternativeName>
        <fullName evidence="7">52 kDa globulin-like protein</fullName>
    </alternativeName>
    <allergenName>Ory s NRA</allergenName>
</protein>
<dbReference type="EC" id="3.4.-.-" evidence="7"/>
<dbReference type="EMBL" id="GU120359">
    <property type="protein sequence ID" value="ADR66992.1"/>
    <property type="molecule type" value="mRNA"/>
</dbReference>
<dbReference type="EMBL" id="AY098743">
    <property type="protein sequence ID" value="AAM33459.2"/>
    <property type="molecule type" value="mRNA"/>
</dbReference>
<dbReference type="EMBL" id="AC090871">
    <property type="protein sequence ID" value="AAO37963.2"/>
    <property type="molecule type" value="Genomic_DNA"/>
</dbReference>
<dbReference type="EMBL" id="DP000009">
    <property type="protein sequence ID" value="ABF99314.1"/>
    <property type="molecule type" value="Genomic_DNA"/>
</dbReference>
<dbReference type="EMBL" id="AP008209">
    <property type="protein sequence ID" value="BAF13447.1"/>
    <property type="molecule type" value="Genomic_DNA"/>
</dbReference>
<dbReference type="EMBL" id="AP014959">
    <property type="protein sequence ID" value="BAS86810.1"/>
    <property type="molecule type" value="Genomic_DNA"/>
</dbReference>
<dbReference type="EMBL" id="AK121667">
    <property type="protein sequence ID" value="BAH00598.1"/>
    <property type="molecule type" value="mRNA"/>
</dbReference>
<dbReference type="RefSeq" id="XP_015628337.1">
    <property type="nucleotide sequence ID" value="XM_015772851.1"/>
</dbReference>
<dbReference type="SMR" id="Q852L2"/>
<dbReference type="FunCoup" id="Q852L2">
    <property type="interactions" value="55"/>
</dbReference>
<dbReference type="STRING" id="39947.Q852L2"/>
<dbReference type="Allergome" id="9525">
    <property type="allergen name" value="Ory s NRA"/>
</dbReference>
<dbReference type="Allergome" id="9527">
    <property type="allergen name" value="Ory s GLP52"/>
</dbReference>
<dbReference type="CarbonylDB" id="Q852L2"/>
<dbReference type="PaxDb" id="39947-Q852L2"/>
<dbReference type="EnsemblPlants" id="Os03t0793700-01">
    <property type="protein sequence ID" value="Os03t0793700-01"/>
    <property type="gene ID" value="Os03g0793700"/>
</dbReference>
<dbReference type="Gramene" id="Os03t0793700-01">
    <property type="protein sequence ID" value="Os03t0793700-01"/>
    <property type="gene ID" value="Os03g0793700"/>
</dbReference>
<dbReference type="KEGG" id="dosa:Os03g0793700"/>
<dbReference type="eggNOG" id="ENOG502QQEP">
    <property type="taxonomic scope" value="Eukaryota"/>
</dbReference>
<dbReference type="HOGENOM" id="CLU_018703_2_0_1"/>
<dbReference type="InParanoid" id="Q852L2"/>
<dbReference type="OMA" id="FRHWTRT"/>
<dbReference type="OrthoDB" id="1912756at2759"/>
<dbReference type="Proteomes" id="UP000000763">
    <property type="component" value="Chromosome 3"/>
</dbReference>
<dbReference type="Proteomes" id="UP000059680">
    <property type="component" value="Chromosome 3"/>
</dbReference>
<dbReference type="GO" id="GO:0005576">
    <property type="term" value="C:extracellular region"/>
    <property type="evidence" value="ECO:0007669"/>
    <property type="project" value="UniProtKB-SubCell"/>
</dbReference>
<dbReference type="GO" id="GO:0019863">
    <property type="term" value="F:IgE binding"/>
    <property type="evidence" value="ECO:0000314"/>
    <property type="project" value="UniProtKB"/>
</dbReference>
<dbReference type="GO" id="GO:0046872">
    <property type="term" value="F:metal ion binding"/>
    <property type="evidence" value="ECO:0007669"/>
    <property type="project" value="UniProtKB-KW"/>
</dbReference>
<dbReference type="GO" id="GO:0008237">
    <property type="term" value="F:metallopeptidase activity"/>
    <property type="evidence" value="ECO:0007669"/>
    <property type="project" value="UniProtKB-KW"/>
</dbReference>
<dbReference type="GO" id="GO:0045735">
    <property type="term" value="F:nutrient reservoir activity"/>
    <property type="evidence" value="ECO:0007669"/>
    <property type="project" value="UniProtKB-KW"/>
</dbReference>
<dbReference type="GO" id="GO:0006508">
    <property type="term" value="P:proteolysis"/>
    <property type="evidence" value="ECO:0007669"/>
    <property type="project" value="UniProtKB-KW"/>
</dbReference>
<dbReference type="CDD" id="cd02245">
    <property type="entry name" value="cupin_7S_vicilin-like_C"/>
    <property type="match status" value="1"/>
</dbReference>
<dbReference type="CDD" id="cd02244">
    <property type="entry name" value="cupin_7S_vicilin-like_N"/>
    <property type="match status" value="1"/>
</dbReference>
<dbReference type="FunFam" id="2.60.120.10:FF:000145">
    <property type="entry name" value="Vicilin-like antimicrobial peptides 2-2"/>
    <property type="match status" value="1"/>
</dbReference>
<dbReference type="FunFam" id="2.60.120.10:FF:000173">
    <property type="entry name" value="Vicilin-like antimicrobial peptides 2-3"/>
    <property type="match status" value="1"/>
</dbReference>
<dbReference type="Gene3D" id="2.60.120.10">
    <property type="entry name" value="Jelly Rolls"/>
    <property type="match status" value="2"/>
</dbReference>
<dbReference type="InterPro" id="IPR006045">
    <property type="entry name" value="Cupin_1"/>
</dbReference>
<dbReference type="InterPro" id="IPR014710">
    <property type="entry name" value="RmlC-like_jellyroll"/>
</dbReference>
<dbReference type="InterPro" id="IPR011051">
    <property type="entry name" value="RmlC_Cupin_sf"/>
</dbReference>
<dbReference type="InterPro" id="IPR050253">
    <property type="entry name" value="Seed_Storage-Functional"/>
</dbReference>
<dbReference type="PANTHER" id="PTHR31189:SF13">
    <property type="entry name" value="CUPINCIN"/>
    <property type="match status" value="1"/>
</dbReference>
<dbReference type="PANTHER" id="PTHR31189">
    <property type="entry name" value="OS03G0336100 PROTEIN-RELATED"/>
    <property type="match status" value="1"/>
</dbReference>
<dbReference type="Pfam" id="PF00190">
    <property type="entry name" value="Cupin_1"/>
    <property type="match status" value="2"/>
</dbReference>
<dbReference type="SMART" id="SM00835">
    <property type="entry name" value="Cupin_1"/>
    <property type="match status" value="2"/>
</dbReference>
<dbReference type="SUPFAM" id="SSF51182">
    <property type="entry name" value="RmlC-like cupins"/>
    <property type="match status" value="2"/>
</dbReference>